<comment type="function">
    <text evidence="1 2 3">Plays a role in virus cell tropism, and may be required for efficient virus replication in macrophages. Interferes with host NF-kappa-B promoter activity mediated by TLR8. Mechanistically, inhibits the phosphorylation and subsequent nuclear translocation of host NF-kappa-B RELA subunit downstream of TLR8 (PubMed:34696476). Promotes the expression of the autophagy-related protein host ULK1 to degrade host STING and inhibit the interferon response (PubMed:33712518). Inhibits also JAK1- and JAK2-mediated signaling and thus negatively regulates the IFN-gamma signaling (PubMed:33712518, PubMed:34517008, PubMed:34696476).</text>
</comment>
<comment type="subunit">
    <text evidence="1 2 3">Interacts with host STING1 (PubMed:33712518). Interacts with host JAK1; this interaction leads to JAK1 degradation (PubMed:34517008). Interacts with host JAK2; this interaction leads to JAK2 degradation (PubMed:34517008). Interacts with host RELA; this interaction inhibits NF-kappa-B promoter activity (PubMed:34696476).</text>
</comment>
<comment type="subcellular location">
    <subcellularLocation>
        <location evidence="3">Host cytoplasm</location>
    </subcellularLocation>
</comment>
<comment type="induction">
    <text evidence="2">Expressed in the early phase of the viral replicative cycle.</text>
</comment>
<comment type="similarity">
    <text evidence="4">Belongs to the asfivirus MGF 505 family.</text>
</comment>
<name>5057R_ASFB7</name>
<keyword id="KW-0040">ANK repeat</keyword>
<keyword id="KW-1035">Host cytoplasm</keyword>
<keyword id="KW-1185">Reference proteome</keyword>
<keyword id="KW-0677">Repeat</keyword>
<feature type="chain" id="PRO_0000373339" description="Protein MGF 505-7R">
    <location>
        <begin position="1"/>
        <end position="528"/>
    </location>
</feature>
<feature type="repeat" description="ANK 1">
    <location>
        <begin position="54"/>
        <end position="83"/>
    </location>
</feature>
<feature type="repeat" description="ANK 2">
    <location>
        <begin position="129"/>
        <end position="158"/>
    </location>
</feature>
<feature type="repeat" description="ANK 3">
    <location>
        <begin position="261"/>
        <end position="290"/>
    </location>
</feature>
<feature type="repeat" description="ANK 4">
    <location>
        <begin position="292"/>
        <end position="321"/>
    </location>
</feature>
<feature type="repeat" description="ANK 5">
    <location>
        <begin position="322"/>
        <end position="352"/>
    </location>
</feature>
<gene>
    <name type="ordered locus">BA71R-029</name>
    <name type="ORF">A528R</name>
</gene>
<dbReference type="EMBL" id="U02468">
    <property type="protein sequence ID" value="AAA17789.1"/>
    <property type="molecule type" value="Genomic_DNA"/>
</dbReference>
<dbReference type="EMBL" id="U18466">
    <property type="protein sequence ID" value="AAA65260.1"/>
    <property type="molecule type" value="Genomic_DNA"/>
</dbReference>
<dbReference type="RefSeq" id="NP_042724.1">
    <property type="nucleotide sequence ID" value="NC_001659.2"/>
</dbReference>
<dbReference type="SMR" id="Q89925"/>
<dbReference type="GeneID" id="22220412"/>
<dbReference type="KEGG" id="vg:22220412"/>
<dbReference type="Proteomes" id="UP000000624">
    <property type="component" value="Segment"/>
</dbReference>
<dbReference type="GO" id="GO:0030430">
    <property type="term" value="C:host cell cytoplasm"/>
    <property type="evidence" value="ECO:0007669"/>
    <property type="project" value="UniProtKB-SubCell"/>
</dbReference>
<dbReference type="Gene3D" id="1.25.40.20">
    <property type="entry name" value="Ankyrin repeat-containing domain"/>
    <property type="match status" value="1"/>
</dbReference>
<dbReference type="InterPro" id="IPR036770">
    <property type="entry name" value="Ankyrin_rpt-contain_sf"/>
</dbReference>
<dbReference type="InterPro" id="IPR004858">
    <property type="entry name" value="MGF_505"/>
</dbReference>
<dbReference type="Pfam" id="PF03158">
    <property type="entry name" value="DUF249"/>
    <property type="match status" value="1"/>
</dbReference>
<dbReference type="SUPFAM" id="SSF140860">
    <property type="entry name" value="Pseudo ankyrin repeat-like"/>
    <property type="match status" value="1"/>
</dbReference>
<organism>
    <name type="scientific">African swine fever virus (strain Badajoz 1971 Vero-adapted)</name>
    <name type="common">Ba71V</name>
    <name type="synonym">ASFV</name>
    <dbReference type="NCBI Taxonomy" id="10498"/>
    <lineage>
        <taxon>Viruses</taxon>
        <taxon>Varidnaviria</taxon>
        <taxon>Bamfordvirae</taxon>
        <taxon>Nucleocytoviricota</taxon>
        <taxon>Pokkesviricetes</taxon>
        <taxon>Asfuvirales</taxon>
        <taxon>Asfarviridae</taxon>
        <taxon>Asfivirus</taxon>
        <taxon>African swine fever virus</taxon>
    </lineage>
</organism>
<proteinExistence type="evidence at protein level"/>
<protein>
    <recommendedName>
        <fullName>Protein MGF 505-7R</fullName>
    </recommendedName>
</protein>
<evidence type="ECO:0000269" key="1">
    <source>
    </source>
</evidence>
<evidence type="ECO:0000269" key="2">
    <source>
    </source>
</evidence>
<evidence type="ECO:0000269" key="3">
    <source>
    </source>
</evidence>
<evidence type="ECO:0000305" key="4"/>
<accession>Q89925</accession>
<organismHost>
    <name type="scientific">Ornithodoros</name>
    <name type="common">relapsing fever ticks</name>
    <dbReference type="NCBI Taxonomy" id="6937"/>
</organismHost>
<organismHost>
    <name type="scientific">Sus scrofa</name>
    <name type="common">Pig</name>
    <dbReference type="NCBI Taxonomy" id="9823"/>
</organismHost>
<sequence length="528" mass="61841">MFSLQDLCRKNTFFLPNDFSKHTLQRLGLYWKEHGSVHRIEKDSIMIQNELVLSINDALQLAGEEGDTDVVQLLLLWEGNLHYAIIGALKTENYNLVCEYHSQIQDWHILLPLIQDPETFEKCHDLSLGCDLICLLQHAVKCDMLSILVKYKEDLLNVRIRHRTQSLFVLACENRRFEIIEWIGQNLSIPEPEAIFSIAIVTKDVELFSLGYKIIFDYMQRQGIFQLTNVVRMLLLNRHIGMAIEKGLLPFILETLKYGGSVKRALSYAVIDNKRKIIDYLVRHENIPRGTIERLLHLAVKKQSSRKTLNLLLSYINYKVKNVKKLLEHVVKYNSTLVIRILLEKKKNLLDATLTRYVKDSTYFQVKEFMQDFSISPEKFIKIAVREKRNVLIKGISEDIWENPAERIRNLKQIVCTIKYESGRQFLINIIHTIYQSYSLKPEEILKLATFYVKHNATTHFKDLCKYLWLNRGTESKKLFLECLEIADEKEFPDIKSIVSEYINYLFTAGAITKEEIMQVYALEYAMY</sequence>
<reference key="1">
    <citation type="journal article" date="1995" name="Virology">
        <title>Analysis of the complete nucleotide sequence of African swine fever virus.</title>
        <authorList>
            <person name="Yanez R.J."/>
            <person name="Rodriguez J.M."/>
            <person name="Nogal M.L."/>
            <person name="Yuste L."/>
            <person name="Enriquez C."/>
            <person name="Rodriguez J.F."/>
            <person name="Vinuela E."/>
        </authorList>
    </citation>
    <scope>NUCLEOTIDE SEQUENCE [LARGE SCALE GENOMIC DNA]</scope>
</reference>
<reference key="2">
    <citation type="journal article" date="2021" name="J. Immunol.">
        <title>African Swine Fever Virus MGF-505-7R Negatively Regulates cGAS-STING-Mediated Signaling Pathway.</title>
        <authorList>
            <person name="Li D."/>
            <person name="Yang W."/>
            <person name="Li L."/>
            <person name="Li P."/>
            <person name="Ma Z."/>
            <person name="Zhang J."/>
            <person name="Qi X."/>
            <person name="Ren J."/>
            <person name="Ru Y."/>
            <person name="Niu Q."/>
            <person name="Liu Z."/>
            <person name="Liu X."/>
            <person name="Zheng H."/>
        </authorList>
    </citation>
    <scope>FUNCTION</scope>
    <scope>INTERACTION WITH HOST STING1</scope>
    <scope>SUBCELLULAR LOCATION</scope>
</reference>
<reference key="3">
    <citation type="journal article" date="2021" name="J. Biol. Chem.">
        <title>African swine fever virus protein MGF-505-7R promotes virulence and pathogenesis by inhibiting JAK1- and JAK2-mediated signaling.</title>
        <authorList>
            <person name="Li D."/>
            <person name="Zhang J."/>
            <person name="Yang W."/>
            <person name="Li P."/>
            <person name="Ru Y."/>
            <person name="Kang W."/>
            <person name="Li L."/>
            <person name="Ran Y."/>
            <person name="Zheng H."/>
        </authorList>
    </citation>
    <scope>FUNCTION</scope>
    <scope>INTERACTION WITH HOST JAK1 AND JAK2</scope>
    <scope>INDUCTION</scope>
</reference>
<reference key="4">
    <citation type="journal article" date="2021" name="Viruses">
        <title>African Swine Fever Virus A528R Inhibits TLR8 Mediated NF-kappaB Activity by Targeting p65 Activation and Nuclear Translocation.</title>
        <authorList>
            <person name="Liu X."/>
            <person name="Ao D."/>
            <person name="Jiang S."/>
            <person name="Xia N."/>
            <person name="Xu Y."/>
            <person name="Shao Q."/>
            <person name="Luo J."/>
            <person name="Wang H."/>
            <person name="Zheng W."/>
            <person name="Chen N."/>
            <person name="Meurens F."/>
            <person name="Zhu J."/>
        </authorList>
    </citation>
    <scope>FUNCTION</scope>
    <scope>SUBCELLULAR LOCATION</scope>
    <scope>INTERACTION WITH HOST RELA</scope>
</reference>